<keyword id="KW-0150">Chloroplast</keyword>
<keyword id="KW-0472">Membrane</keyword>
<keyword id="KW-0602">Photosynthesis</keyword>
<keyword id="KW-0604">Photosystem II</keyword>
<keyword id="KW-0934">Plastid</keyword>
<keyword id="KW-0674">Reaction center</keyword>
<keyword id="KW-0793">Thylakoid</keyword>
<keyword id="KW-0812">Transmembrane</keyword>
<keyword id="KW-1133">Transmembrane helix</keyword>
<evidence type="ECO:0000255" key="1">
    <source>
        <dbReference type="HAMAP-Rule" id="MF_00441"/>
    </source>
</evidence>
<dbReference type="EMBL" id="AY673996">
    <property type="protein sequence ID" value="AAT79685.1"/>
    <property type="molecule type" value="Genomic_DNA"/>
</dbReference>
<dbReference type="RefSeq" id="YP_063610.1">
    <property type="nucleotide sequence ID" value="NC_006137.1"/>
</dbReference>
<dbReference type="SMR" id="Q6B8V0"/>
<dbReference type="GeneID" id="2943988"/>
<dbReference type="GO" id="GO:0009535">
    <property type="term" value="C:chloroplast thylakoid membrane"/>
    <property type="evidence" value="ECO:0007669"/>
    <property type="project" value="UniProtKB-SubCell"/>
</dbReference>
<dbReference type="GO" id="GO:0009539">
    <property type="term" value="C:photosystem II reaction center"/>
    <property type="evidence" value="ECO:0007669"/>
    <property type="project" value="InterPro"/>
</dbReference>
<dbReference type="GO" id="GO:0015979">
    <property type="term" value="P:photosynthesis"/>
    <property type="evidence" value="ECO:0007669"/>
    <property type="project" value="UniProtKB-UniRule"/>
</dbReference>
<dbReference type="HAMAP" id="MF_00441">
    <property type="entry name" value="PSII_PsbK"/>
    <property type="match status" value="1"/>
</dbReference>
<dbReference type="InterPro" id="IPR003687">
    <property type="entry name" value="PSII_PsbK"/>
</dbReference>
<dbReference type="InterPro" id="IPR037270">
    <property type="entry name" value="PSII_PsbK_sf"/>
</dbReference>
<dbReference type="NCBIfam" id="NF002715">
    <property type="entry name" value="PRK02553.1"/>
    <property type="match status" value="1"/>
</dbReference>
<dbReference type="PANTHER" id="PTHR35325">
    <property type="match status" value="1"/>
</dbReference>
<dbReference type="PANTHER" id="PTHR35325:SF1">
    <property type="entry name" value="PHOTOSYSTEM II REACTION CENTER PROTEIN K"/>
    <property type="match status" value="1"/>
</dbReference>
<dbReference type="Pfam" id="PF02533">
    <property type="entry name" value="PsbK"/>
    <property type="match status" value="1"/>
</dbReference>
<dbReference type="SUPFAM" id="SSF161037">
    <property type="entry name" value="Photosystem II reaction center protein K, PsbK"/>
    <property type="match status" value="1"/>
</dbReference>
<accession>Q6B8V0</accession>
<comment type="function">
    <text evidence="1">One of the components of the core complex of photosystem II (PSII). PSII is a light-driven water:plastoquinone oxidoreductase that uses light energy to abstract electrons from H(2)O, generating O(2) and a proton gradient subsequently used for ATP formation. It consists of a core antenna complex that captures photons, and an electron transfer chain that converts photonic excitation into a charge separation.</text>
</comment>
<comment type="subunit">
    <text evidence="1">PSII is composed of 1 copy each of membrane proteins PsbA, PsbB, PsbC, PsbD, PsbE, PsbF, PsbH, PsbI, PsbJ, PsbK, PsbL, PsbM, PsbT, PsbX, PsbY, PsbZ, Psb30/Ycf12, at least 3 peripheral proteins of the oxygen-evolving complex and a large number of cofactors. It forms dimeric complexes.</text>
</comment>
<comment type="subcellular location">
    <subcellularLocation>
        <location evidence="1">Plastid</location>
        <location evidence="1">Chloroplast thylakoid membrane</location>
        <topology evidence="1">Single-pass membrane protein</topology>
    </subcellularLocation>
</comment>
<comment type="similarity">
    <text evidence="1">Belongs to the PsbK family.</text>
</comment>
<name>PSBK_GRATL</name>
<geneLocation type="chloroplast"/>
<protein>
    <recommendedName>
        <fullName evidence="1">Photosystem II reaction center protein K</fullName>
        <shortName evidence="1">PSII-K</shortName>
    </recommendedName>
</protein>
<sequence length="45" mass="5102">MITAIIIAKLPEAYTVFRPLVDILPVIPIFFLLLAFVWQAAIGFR</sequence>
<feature type="propeptide" id="PRO_0000029471" evidence="1">
    <location>
        <begin position="1"/>
        <end position="8"/>
    </location>
</feature>
<feature type="chain" id="PRO_0000029472" description="Photosystem II reaction center protein K" evidence="1">
    <location>
        <begin position="9"/>
        <end position="45"/>
    </location>
</feature>
<feature type="transmembrane region" description="Helical" evidence="1">
    <location>
        <begin position="23"/>
        <end position="43"/>
    </location>
</feature>
<organism>
    <name type="scientific">Gracilaria tenuistipitata var. liui</name>
    <name type="common">Red alga</name>
    <dbReference type="NCBI Taxonomy" id="285951"/>
    <lineage>
        <taxon>Eukaryota</taxon>
        <taxon>Rhodophyta</taxon>
        <taxon>Florideophyceae</taxon>
        <taxon>Rhodymeniophycidae</taxon>
        <taxon>Gracilariales</taxon>
        <taxon>Gracilariaceae</taxon>
        <taxon>Gracilaria</taxon>
        <taxon>Gracilaria tenuistipitata</taxon>
    </lineage>
</organism>
<reference key="1">
    <citation type="journal article" date="2004" name="J. Mol. Evol.">
        <title>Comparative analysis of the complete plastid genome sequence of the red alga Gracilaria tenuistipitata var. liui provides insights into the evolution of rhodoplasts and their relationship to other plastids.</title>
        <authorList>
            <person name="Hagopian J.C."/>
            <person name="Reis M."/>
            <person name="Kitajima J.P."/>
            <person name="Bhattacharya D."/>
            <person name="de Oliveira M.C."/>
        </authorList>
    </citation>
    <scope>NUCLEOTIDE SEQUENCE [LARGE SCALE GENOMIC DNA]</scope>
</reference>
<gene>
    <name evidence="1" type="primary">psbK</name>
    <name type="ordered locus">Grc000104</name>
</gene>
<proteinExistence type="inferred from homology"/>